<name>RL4_MYCTO</name>
<dbReference type="EMBL" id="AE000516">
    <property type="protein sequence ID" value="AAK44960.1"/>
    <property type="molecule type" value="Genomic_DNA"/>
</dbReference>
<dbReference type="PIR" id="A70642">
    <property type="entry name" value="A70642"/>
</dbReference>
<dbReference type="RefSeq" id="WP_003403580.1">
    <property type="nucleotide sequence ID" value="NZ_KK341227.1"/>
</dbReference>
<dbReference type="SMR" id="P9WH84"/>
<dbReference type="KEGG" id="mtc:MT0729"/>
<dbReference type="PATRIC" id="fig|83331.31.peg.779"/>
<dbReference type="HOGENOM" id="CLU_041575_5_0_11"/>
<dbReference type="Proteomes" id="UP000001020">
    <property type="component" value="Chromosome"/>
</dbReference>
<dbReference type="GO" id="GO:1990904">
    <property type="term" value="C:ribonucleoprotein complex"/>
    <property type="evidence" value="ECO:0007669"/>
    <property type="project" value="UniProtKB-KW"/>
</dbReference>
<dbReference type="GO" id="GO:0005840">
    <property type="term" value="C:ribosome"/>
    <property type="evidence" value="ECO:0007669"/>
    <property type="project" value="UniProtKB-KW"/>
</dbReference>
<dbReference type="GO" id="GO:0019843">
    <property type="term" value="F:rRNA binding"/>
    <property type="evidence" value="ECO:0007669"/>
    <property type="project" value="UniProtKB-UniRule"/>
</dbReference>
<dbReference type="GO" id="GO:0003735">
    <property type="term" value="F:structural constituent of ribosome"/>
    <property type="evidence" value="ECO:0007669"/>
    <property type="project" value="InterPro"/>
</dbReference>
<dbReference type="GO" id="GO:0006412">
    <property type="term" value="P:translation"/>
    <property type="evidence" value="ECO:0007669"/>
    <property type="project" value="UniProtKB-UniRule"/>
</dbReference>
<dbReference type="FunFam" id="3.40.1370.10:FF:000004">
    <property type="entry name" value="50S ribosomal protein L4"/>
    <property type="match status" value="1"/>
</dbReference>
<dbReference type="Gene3D" id="3.40.1370.10">
    <property type="match status" value="1"/>
</dbReference>
<dbReference type="HAMAP" id="MF_01328_B">
    <property type="entry name" value="Ribosomal_uL4_B"/>
    <property type="match status" value="1"/>
</dbReference>
<dbReference type="InterPro" id="IPR002136">
    <property type="entry name" value="Ribosomal_uL4"/>
</dbReference>
<dbReference type="InterPro" id="IPR013005">
    <property type="entry name" value="Ribosomal_uL4-like"/>
</dbReference>
<dbReference type="InterPro" id="IPR023574">
    <property type="entry name" value="Ribosomal_uL4_dom_sf"/>
</dbReference>
<dbReference type="NCBIfam" id="TIGR03953">
    <property type="entry name" value="rplD_bact"/>
    <property type="match status" value="1"/>
</dbReference>
<dbReference type="PANTHER" id="PTHR10746">
    <property type="entry name" value="50S RIBOSOMAL PROTEIN L4"/>
    <property type="match status" value="1"/>
</dbReference>
<dbReference type="PANTHER" id="PTHR10746:SF6">
    <property type="entry name" value="LARGE RIBOSOMAL SUBUNIT PROTEIN UL4M"/>
    <property type="match status" value="1"/>
</dbReference>
<dbReference type="Pfam" id="PF00573">
    <property type="entry name" value="Ribosomal_L4"/>
    <property type="match status" value="1"/>
</dbReference>
<dbReference type="SUPFAM" id="SSF52166">
    <property type="entry name" value="Ribosomal protein L4"/>
    <property type="match status" value="1"/>
</dbReference>
<evidence type="ECO:0000255" key="1">
    <source>
        <dbReference type="HAMAP-Rule" id="MF_01328"/>
    </source>
</evidence>
<evidence type="ECO:0000256" key="2">
    <source>
        <dbReference type="SAM" id="MobiDB-lite"/>
    </source>
</evidence>
<evidence type="ECO:0000305" key="3"/>
<comment type="function">
    <text evidence="1">One of the primary rRNA binding proteins, this protein initially binds near the 5'-end of the 23S rRNA. It is important during the early stages of 50S assembly. It makes multiple contacts with different domains of the 23S rRNA in the assembled 50S subunit and ribosome.</text>
</comment>
<comment type="function">
    <text evidence="1">Forms part of the polypeptide exit tunnel.</text>
</comment>
<comment type="subunit">
    <text evidence="1">Part of the 50S ribosomal subunit.</text>
</comment>
<comment type="similarity">
    <text evidence="1">Belongs to the universal ribosomal protein uL4 family.</text>
</comment>
<organism>
    <name type="scientific">Mycobacterium tuberculosis (strain CDC 1551 / Oshkosh)</name>
    <dbReference type="NCBI Taxonomy" id="83331"/>
    <lineage>
        <taxon>Bacteria</taxon>
        <taxon>Bacillati</taxon>
        <taxon>Actinomycetota</taxon>
        <taxon>Actinomycetes</taxon>
        <taxon>Mycobacteriales</taxon>
        <taxon>Mycobacteriaceae</taxon>
        <taxon>Mycobacterium</taxon>
        <taxon>Mycobacterium tuberculosis complex</taxon>
    </lineage>
</organism>
<proteinExistence type="inferred from homology"/>
<protein>
    <recommendedName>
        <fullName evidence="1">Large ribosomal subunit protein uL4</fullName>
    </recommendedName>
    <alternativeName>
        <fullName evidence="3">50S ribosomal protein L4</fullName>
    </alternativeName>
</protein>
<gene>
    <name evidence="1" type="primary">rplD</name>
    <name type="ordered locus">MT0729</name>
</gene>
<feature type="chain" id="PRO_0000428231" description="Large ribosomal subunit protein uL4">
    <location>
        <begin position="1"/>
        <end position="223"/>
    </location>
</feature>
<feature type="region of interest" description="Disordered" evidence="2">
    <location>
        <begin position="49"/>
        <end position="106"/>
    </location>
</feature>
<keyword id="KW-1185">Reference proteome</keyword>
<keyword id="KW-0687">Ribonucleoprotein</keyword>
<keyword id="KW-0689">Ribosomal protein</keyword>
<keyword id="KW-0694">RNA-binding</keyword>
<keyword id="KW-0699">rRNA-binding</keyword>
<reference key="1">
    <citation type="journal article" date="2002" name="J. Bacteriol.">
        <title>Whole-genome comparison of Mycobacterium tuberculosis clinical and laboratory strains.</title>
        <authorList>
            <person name="Fleischmann R.D."/>
            <person name="Alland D."/>
            <person name="Eisen J.A."/>
            <person name="Carpenter L."/>
            <person name="White O."/>
            <person name="Peterson J.D."/>
            <person name="DeBoy R.T."/>
            <person name="Dodson R.J."/>
            <person name="Gwinn M.L."/>
            <person name="Haft D.H."/>
            <person name="Hickey E.K."/>
            <person name="Kolonay J.F."/>
            <person name="Nelson W.C."/>
            <person name="Umayam L.A."/>
            <person name="Ermolaeva M.D."/>
            <person name="Salzberg S.L."/>
            <person name="Delcher A."/>
            <person name="Utterback T.R."/>
            <person name="Weidman J.F."/>
            <person name="Khouri H.M."/>
            <person name="Gill J."/>
            <person name="Mikula A."/>
            <person name="Bishai W."/>
            <person name="Jacobs W.R. Jr."/>
            <person name="Venter J.C."/>
            <person name="Fraser C.M."/>
        </authorList>
    </citation>
    <scope>NUCLEOTIDE SEQUENCE [LARGE SCALE GENOMIC DNA]</scope>
    <source>
        <strain>CDC 1551 / Oshkosh</strain>
    </source>
</reference>
<sequence length="223" mass="23743">MAAQEQKTLKIDVKTPAGKVDGAIELPAELFDVPANIALMHQVVTAQRAAARQGTHSTKTRGEVSGGGRKPYRQKGTGRARQGSTRAPQFTGGGVVHGPKPRDYSQRTPKKMIAAALRGALSDRARNGRIHAITELVEGQNPSTKSARAFLASLTERKQVLVVIGRSDEAGAKSVRNLPGVHILAPDQLNTYDVLRADDVVFSVEALNAYIAANTTTSEEVSA</sequence>
<accession>P9WH84</accession>
<accession>L0T4L8</accession>
<accession>O06045</accession>
<accession>P60729</accession>
<accession>P95050</accession>